<accession>G3FLZ7</accession>
<comment type="function">
    <text evidence="5">Flavin-dependent halogenase involved in the biosynthesis of melleolides, a range of antifungal and phytotoxic polyketide derivatives composed of an orsellinic acid (OA) moiety esterified to various sesquiterpene alcohols. The halogenase catalyzes the transfer of a single chlorine atom to the melleolide backbone, resulting in a 6'-chloromelleolide product. The enzyme acts on free substrate and does not depend on carrier-protein-dependent acceptor molecules.</text>
</comment>
<comment type="catalytic activity">
    <reaction evidence="5">
        <text>melleolide F + FADH2 + chloride + O2 = 6'-chloromelleolide F + FAD + 2 H2O + H(+)</text>
        <dbReference type="Rhea" id="RHEA:67160"/>
        <dbReference type="ChEBI" id="CHEBI:15377"/>
        <dbReference type="ChEBI" id="CHEBI:15378"/>
        <dbReference type="ChEBI" id="CHEBI:15379"/>
        <dbReference type="ChEBI" id="CHEBI:17996"/>
        <dbReference type="ChEBI" id="CHEBI:57692"/>
        <dbReference type="ChEBI" id="CHEBI:58307"/>
        <dbReference type="ChEBI" id="CHEBI:167712"/>
        <dbReference type="ChEBI" id="CHEBI:167713"/>
    </reaction>
    <physiologicalReaction direction="left-to-right" evidence="5">
        <dbReference type="Rhea" id="RHEA:67161"/>
    </physiologicalReaction>
</comment>
<comment type="biotechnology">
    <text evidence="2 3 4 6 7 8">Melleolide sesquiterpene aryl esters are cytotoxic secondary products with anti-cancer potential (PubMed:21376582, PubMed:26952552). Armillaridin shows therapeutic and radiosensitizing effects on human esophageal cancer cells (PubMed:23864890). Armillaridin induces autophagy-associated cell death in human chronic myelogenous leukemia as well as of hepatocellular carcinoma cells (PubMed:27592257, PubMed:31488037). Armillaridin can also inhibit the differentiation and activation of human macrophages and thus might have potential to be developed as a biological response modifier for inflammatory diseases (PubMed:25746621).</text>
</comment>
<comment type="miscellaneous">
    <text evidence="9 12">Armillaria species are both devastating forest pathogens and some of the largest and oldest terrestrial organisms on Earth (Probable) (PubMed:31746694). They forage for hosts and achieve immense colony sizes via rhizomorphs, root-like multicellular structures of clonal dispersal (Probable).</text>
</comment>
<comment type="similarity">
    <text evidence="11">Belongs to the flavin-dependent halogenase family.</text>
</comment>
<organism>
    <name type="scientific">Armillaria mellea</name>
    <name type="common">Honey mushroom</name>
    <name type="synonym">Agaricus melleus</name>
    <dbReference type="NCBI Taxonomy" id="47429"/>
    <lineage>
        <taxon>Eukaryota</taxon>
        <taxon>Fungi</taxon>
        <taxon>Dikarya</taxon>
        <taxon>Basidiomycota</taxon>
        <taxon>Agaricomycotina</taxon>
        <taxon>Agaricomycetes</taxon>
        <taxon>Agaricomycetidae</taxon>
        <taxon>Agaricales</taxon>
        <taxon>Marasmiineae</taxon>
        <taxon>Physalacriaceae</taxon>
        <taxon>Armillaria</taxon>
    </lineage>
</organism>
<name>ARMH1_ARMME</name>
<evidence type="ECO:0000250" key="1">
    <source>
        <dbReference type="UniProtKB" id="P95480"/>
    </source>
</evidence>
<evidence type="ECO:0000269" key="2">
    <source>
    </source>
</evidence>
<evidence type="ECO:0000269" key="3">
    <source>
    </source>
</evidence>
<evidence type="ECO:0000269" key="4">
    <source>
    </source>
</evidence>
<evidence type="ECO:0000269" key="5">
    <source>
    </source>
</evidence>
<evidence type="ECO:0000269" key="6">
    <source>
    </source>
</evidence>
<evidence type="ECO:0000269" key="7">
    <source>
    </source>
</evidence>
<evidence type="ECO:0000269" key="8">
    <source>
    </source>
</evidence>
<evidence type="ECO:0000269" key="9">
    <source>
    </source>
</evidence>
<evidence type="ECO:0000303" key="10">
    <source>
    </source>
</evidence>
<evidence type="ECO:0000305" key="11"/>
<evidence type="ECO:0000305" key="12">
    <source>
    </source>
</evidence>
<protein>
    <recommendedName>
        <fullName evidence="10">Flavin-dependent halogenase armH1</fullName>
        <ecNumber evidence="5">1.14.19.-</ecNumber>
    </recommendedName>
</protein>
<reference key="1">
    <citation type="journal article" date="2011" name="Fungal Biol.">
        <title>Characterisation of the ArmA adenylation domain implies a more diverse secondary metabolism in the genus Armillaria.</title>
        <authorList>
            <person name="Misiek M."/>
            <person name="Braesel J."/>
            <person name="Hoffmeister D."/>
        </authorList>
    </citation>
    <scope>NUCLEOTIDE SEQUENCE [GENOMIC DNA]</scope>
    <source>
        <strain>DSM 3731</strain>
    </source>
</reference>
<reference key="2">
    <citation type="journal article" date="2011" name="Bioorg. Med. Chem. Lett.">
        <title>In vitro cytotoxicity of melleolide antibiotics: structural and mechanistic aspects.</title>
        <authorList>
            <person name="Bohnert M."/>
            <person name="Miethbauer S."/>
            <person name="Dahse H.M."/>
            <person name="Ziemen J."/>
            <person name="Nett M."/>
            <person name="Hoffmeister D."/>
        </authorList>
    </citation>
    <scope>BIOTECHNOLOGY</scope>
</reference>
<reference key="3">
    <citation type="journal article" date="2013" name="Evid. Based Complement Alternat. Med.">
        <title>Therapeutic and radiosensitizing effects of armillaridin on human esophageal cancer cells.</title>
        <authorList>
            <person name="Chi C.W."/>
            <person name="Chen C.C."/>
            <person name="Chen Y.J."/>
        </authorList>
    </citation>
    <scope>BIOTECHNOLOGY</scope>
</reference>
<reference key="4">
    <citation type="journal article" date="2015" name="Appl. Environ. Microbiol.">
        <title>A fivefold parallelized biosynthetic process secures chlorination of Armillaria mellea (honey mushroom) toxins.</title>
        <authorList>
            <person name="Wick J."/>
            <person name="Heine D."/>
            <person name="Lackner G."/>
            <person name="Misiek M."/>
            <person name="Tauber J."/>
            <person name="Jagusch H."/>
            <person name="Hertweck C."/>
            <person name="Hoffmeister D."/>
        </authorList>
    </citation>
    <scope>FUNCTION</scope>
    <scope>CATALYTIC ACTIVITY</scope>
</reference>
<reference key="5">
    <citation type="journal article" date="2015" name="Int. J. Med. Mushrooms">
        <title>Armillaridin, a honey medicinal mushroom, Armillaria mellea (higher basidiomycetes) component, inhibits differentiation and activation of human macrophages.</title>
        <authorList>
            <person name="Liu T.P."/>
            <person name="Chen C.C."/>
            <person name="Shiao P.Y."/>
            <person name="Shieh H.R."/>
            <person name="Chen Y.Y."/>
            <person name="Chen Y.J."/>
        </authorList>
    </citation>
    <scope>BIOTECHNOLOGY</scope>
</reference>
<reference key="6">
    <citation type="journal article" date="2016" name="J. Ethnopharmacol.">
        <title>Structure, cytotoxic activity and mechanism of protoilludane sesquiterpene aryl esters from the mycelium of Armillaria mellea.</title>
        <authorList>
            <person name="Li Z."/>
            <person name="Wang Y."/>
            <person name="Jiang B."/>
            <person name="Li W."/>
            <person name="Zheng L."/>
            <person name="Yang X."/>
            <person name="Bao Y."/>
            <person name="Sun L."/>
            <person name="Huang Y."/>
            <person name="Li Y."/>
        </authorList>
    </citation>
    <scope>BIOTECHNOLOGY</scope>
</reference>
<reference key="7">
    <citation type="journal article" date="2016" name="Tumor Biol.">
        <title>Armillaridin induces autophagy-associated cell death in human chronic myelogenous leukemia K562 cells.</title>
        <authorList>
            <person name="Chang W.H."/>
            <person name="Huang H.L."/>
            <person name="Huang W.P."/>
            <person name="Chen C.C."/>
            <person name="Chen Y.J."/>
        </authorList>
    </citation>
    <scope>BIOTECHNOLOGY</scope>
</reference>
<reference key="8">
    <citation type="journal article" date="2018" name="Curr. Biol.">
        <title>Armillaria.</title>
        <authorList>
            <person name="Sipos G."/>
            <person name="Anderson J.B."/>
            <person name="Nagy L.G."/>
        </authorList>
    </citation>
    <scope>MISCELLANEOUS</scope>
</reference>
<reference key="9">
    <citation type="journal article" date="2019" name="Am. J. Chin. Med.">
        <title>Induction of autophagic death of human hepatocellular carcinoma cells by armillaridin from Armillaria mellea.</title>
        <authorList>
            <person name="Leu Y.S."/>
            <person name="Chen Y.J."/>
            <person name="Chen C.C."/>
            <person name="Huang H.L."/>
        </authorList>
    </citation>
    <scope>BIOTECHNOLOGY</scope>
</reference>
<reference key="10">
    <citation type="journal article" date="2020" name="Plant Dis.">
        <title>Susceptibility of garden trees and shrubs to Armillaria root rot.</title>
        <authorList>
            <person name="Cromey M.G."/>
            <person name="Drakulic J."/>
            <person name="Beal E.J."/>
            <person name="Waghorn I.A.G."/>
            <person name="Perry J.N."/>
            <person name="Clover G.R.G."/>
        </authorList>
    </citation>
    <scope>MISCELLANEOUS</scope>
</reference>
<sequence>MEEQVPSSANILVIGGGPAGSYAATVLAREGFEVILLEKDVFPRYHIGESMLPSCRPFLKFIDCEEKLKNHGFTMKPGAAVKLNQYKREGYTDFISTNPDNAARNVVRSEFDELLLRHASEMGVHVYEGVRVEEIHFAPDEPTRPISLTWSKEDKTRGTVSFNWLVDASGRNGLMSTRYLKNRTFNKTLRNVAVWGYWTGTSCYAPGTTRENAPWFEALIDETGWAWFIPLHNGTTSVGVVLVEEESKRKKSQYRSECKDKSPSEIQHDCYMADLQRAPGLIQLLGTATFEGKLMSAGDYSYHATEYAGSNFRLAGDAGAFIDPFFSSGIHLALTGGLSAASTIAASIRGDCTESEACGFHNSKVGTAYTRFLLVVLGVYKQIRSQETAVLYDVDEDNFDKAFHFLRPVIQGCADADEGLTEAELQSTLDFCTNVFAPTQPETHEAAIQRLGSLADPDGPLLDTDTIDKLTGTDMEAKHALWKINARKPLHSMYDCKRNFGTEIINGFYVKMEQGVLGLVRT</sequence>
<gene>
    <name evidence="10" type="primary">armH1</name>
</gene>
<dbReference type="EC" id="1.14.19.-" evidence="5"/>
<dbReference type="EMBL" id="JF739169">
    <property type="protein sequence ID" value="AEM76785.1"/>
    <property type="molecule type" value="Genomic_DNA"/>
</dbReference>
<dbReference type="SMR" id="G3FLZ7"/>
<dbReference type="BioCyc" id="MetaCyc:MONOMER-20283"/>
<dbReference type="GO" id="GO:0140907">
    <property type="term" value="F:flavin-dependent halogenase activity"/>
    <property type="evidence" value="ECO:0000314"/>
    <property type="project" value="GO_Central"/>
</dbReference>
<dbReference type="GO" id="GO:0004497">
    <property type="term" value="F:monooxygenase activity"/>
    <property type="evidence" value="ECO:0007669"/>
    <property type="project" value="UniProtKB-KW"/>
</dbReference>
<dbReference type="GO" id="GO:0044550">
    <property type="term" value="P:secondary metabolite biosynthetic process"/>
    <property type="evidence" value="ECO:0000314"/>
    <property type="project" value="GO_Central"/>
</dbReference>
<dbReference type="Gene3D" id="3.50.50.60">
    <property type="entry name" value="FAD/NAD(P)-binding domain"/>
    <property type="match status" value="1"/>
</dbReference>
<dbReference type="InterPro" id="IPR036188">
    <property type="entry name" value="FAD/NAD-bd_sf"/>
</dbReference>
<dbReference type="InterPro" id="IPR050816">
    <property type="entry name" value="Flavin-dep_Halogenase_NPB"/>
</dbReference>
<dbReference type="InterPro" id="IPR006905">
    <property type="entry name" value="Flavin_halogenase"/>
</dbReference>
<dbReference type="PANTHER" id="PTHR43747:SF5">
    <property type="entry name" value="FAD-BINDING DOMAIN-CONTAINING PROTEIN"/>
    <property type="match status" value="1"/>
</dbReference>
<dbReference type="PANTHER" id="PTHR43747">
    <property type="entry name" value="FAD-BINDING PROTEIN"/>
    <property type="match status" value="1"/>
</dbReference>
<dbReference type="Pfam" id="PF04820">
    <property type="entry name" value="Trp_halogenase"/>
    <property type="match status" value="2"/>
</dbReference>
<dbReference type="PRINTS" id="PR00420">
    <property type="entry name" value="RNGMNOXGNASE"/>
</dbReference>
<dbReference type="SUPFAM" id="SSF51905">
    <property type="entry name" value="FAD/NAD(P)-binding domain"/>
    <property type="match status" value="1"/>
</dbReference>
<proteinExistence type="evidence at protein level"/>
<feature type="chain" id="PRO_0000442630" description="Flavin-dependent halogenase armH1">
    <location>
        <begin position="1"/>
        <end position="522"/>
    </location>
</feature>
<feature type="binding site" evidence="1">
    <location>
        <position position="16"/>
    </location>
    <ligand>
        <name>FAD</name>
        <dbReference type="ChEBI" id="CHEBI:57692"/>
    </ligand>
</feature>
<feature type="binding site" evidence="1">
    <location>
        <position position="19"/>
    </location>
    <ligand>
        <name>FAD</name>
        <dbReference type="ChEBI" id="CHEBI:57692"/>
    </ligand>
</feature>
<feature type="binding site" evidence="1">
    <location>
        <position position="49"/>
    </location>
    <ligand>
        <name>FAD</name>
        <dbReference type="ChEBI" id="CHEBI:57692"/>
    </ligand>
</feature>
<feature type="binding site" evidence="1">
    <location>
        <position position="328"/>
    </location>
    <ligand>
        <name>chloride</name>
        <dbReference type="ChEBI" id="CHEBI:17996"/>
    </ligand>
</feature>
<feature type="binding site" evidence="1">
    <location>
        <position position="329"/>
    </location>
    <ligand>
        <name>chloride</name>
        <dbReference type="ChEBI" id="CHEBI:17996"/>
    </ligand>
</feature>
<feature type="binding site" evidence="1">
    <location>
        <position position="330"/>
    </location>
    <ligand>
        <name>FAD</name>
        <dbReference type="ChEBI" id="CHEBI:57692"/>
    </ligand>
</feature>
<keyword id="KW-0274">FAD</keyword>
<keyword id="KW-0285">Flavoprotein</keyword>
<keyword id="KW-0503">Monooxygenase</keyword>
<keyword id="KW-0560">Oxidoreductase</keyword>